<protein>
    <recommendedName>
        <fullName evidence="13">DNA-binding protein HupB</fullName>
        <shortName evidence="12">HupB</shortName>
        <shortName evidence="12">MtbHU</shortName>
        <ecNumber evidence="2">1.16.3.1</ecNumber>
    </recommendedName>
    <alternativeName>
        <fullName evidence="13">DNA-binding protein HU homolog</fullName>
    </alternativeName>
    <alternativeName>
        <fullName evidence="11">Histone-like protein</fullName>
    </alternativeName>
</protein>
<sequence length="214" mass="22187">MNKAELIDVLTQKLGSDRRQATAAVENVVDTIVRAVHKGDSVTITGFGVFEQRRRAARVARNPRTGETVKVKPTSVPAFRPGAQFKAVVSGAQRLPAEGPAVKRGVGASAAKKVAKKAPAKKATKAAKKAATKAPARKAATKAPAKKAATKAPAKKAVKATKSPAKKVTKAVKKTAVKASVRKAATKAPAKKAAAKRPATKAPAKKATARRGRK</sequence>
<proteinExistence type="evidence at protein level"/>
<feature type="chain" id="PRO_0000458841" description="DNA-binding protein HupB">
    <location>
        <begin position="1"/>
        <end position="214"/>
    </location>
</feature>
<feature type="region of interest" description="Disordered" evidence="4">
    <location>
        <begin position="100"/>
        <end position="214"/>
    </location>
</feature>
<feature type="compositionally biased region" description="Low complexity" evidence="4">
    <location>
        <begin position="102"/>
        <end position="112"/>
    </location>
</feature>
<feature type="compositionally biased region" description="Basic residues" evidence="4">
    <location>
        <begin position="113"/>
        <end position="214"/>
    </location>
</feature>
<feature type="modified residue" description="N6-acetyllysine" evidence="8">
    <location>
        <position position="3"/>
    </location>
</feature>
<feature type="modified residue" description="N6-succinyllysine" evidence="10">
    <location>
        <position position="3"/>
    </location>
</feature>
<feature type="modified residue" description="Phosphothreonine" evidence="14">
    <location>
        <position position="43"/>
    </location>
</feature>
<feature type="modified residue" description="Phosphothreonine" evidence="14">
    <location>
        <position position="45"/>
    </location>
</feature>
<feature type="modified residue" description="N6-acetyllysine" evidence="8">
    <location>
        <position position="72"/>
    </location>
</feature>
<feature type="modified residue" description="N6-acetyllysine" evidence="8">
    <location>
        <position position="86"/>
    </location>
</feature>
<feature type="modified residue" description="N6-acetyllysine" evidence="8">
    <location>
        <position position="103"/>
    </location>
</feature>
<feature type="modified residue" description="N6-succinyllysine" evidence="10">
    <location>
        <position position="113"/>
    </location>
</feature>
<feature type="modified residue" description="N6-acetyllysine" evidence="8">
    <location>
        <position position="116"/>
    </location>
</feature>
<feature type="modified residue" description="N6-acetyllysine" evidence="8">
    <location>
        <position position="133"/>
    </location>
</feature>
<feature type="modified residue" description="N6-succinyllysine" evidence="10">
    <location>
        <position position="142"/>
    </location>
</feature>
<feature type="modified residue" description="N6-acetyllysine" evidence="8">
    <location>
        <position position="146"/>
    </location>
</feature>
<feature type="modified residue" description="N6-acetyllysine" evidence="8">
    <location>
        <position position="167"/>
    </location>
</feature>
<feature type="mutagenesis site" description="No longer stimulates Top1 relaxation, greatly decreased interaction with Top1." evidence="7">
    <original>D</original>
    <variation>A</variation>
    <location>
        <position position="17"/>
    </location>
</feature>
<feature type="mutagenesis site" description="Reduced binding of DNA and inhibitors. Inhibition of Top1 at high concentrations is reduced." evidence="7">
    <original>R</original>
    <variation>A</variation>
    <location>
        <position position="55"/>
    </location>
</feature>
<feature type="mutagenesis site" description="Loss of DNA-binding, decreased in vitro phosphorylation of N-terminal HupB fragment." evidence="5">
    <original>R</original>
    <variation>E</variation>
    <variation>Q</variation>
    <location>
        <position position="55"/>
    </location>
</feature>
<feature type="mutagenesis site" description="Reduced binding of DNA and inhibitors SD1 and SD4." evidence="6">
    <original>R</original>
    <variation>A</variation>
    <location>
        <position position="58"/>
    </location>
</feature>
<feature type="mutagenesis site" description="Loss of DNA-binding, no change in phosphorylation of N-terminal HupB fragment." evidence="5">
    <original>T</original>
    <variation>A</variation>
    <location>
        <position position="65"/>
    </location>
</feature>
<feature type="mutagenesis site" description="No change in DNA-binding." evidence="5">
    <original>T</original>
    <variation>A</variation>
    <location>
        <position position="68"/>
    </location>
</feature>
<feature type="mutagenesis site" description="Loss of DNA-binding, no change in phosphorylation of N-terminal HupB fragment." evidence="5">
    <original>T</original>
    <variation>A</variation>
    <location>
        <position position="74"/>
    </location>
</feature>
<feature type="mutagenesis site" description="Reduced binding of DNA and inhibitors SD1 and SD4." evidence="6">
    <original>R</original>
    <variation>A</variation>
    <location>
        <position position="80"/>
    </location>
</feature>
<feature type="mutagenesis site" description="Reduced binding of DNA and inhibitors SD1 and SD4." evidence="6">
    <original>K</original>
    <variation>A</variation>
    <location>
        <position position="86"/>
    </location>
</feature>
<feature type="mutagenesis site" description="No change in protein phosphorylation." evidence="5">
    <original>S</original>
    <variation>A</variation>
    <location>
        <position position="163"/>
    </location>
</feature>
<feature type="helix" evidence="20">
    <location>
        <begin position="3"/>
        <end position="14"/>
    </location>
</feature>
<feature type="helix" evidence="20">
    <location>
        <begin position="18"/>
        <end position="37"/>
    </location>
</feature>
<feature type="strand" evidence="20">
    <location>
        <begin position="42"/>
        <end position="44"/>
    </location>
</feature>
<feature type="turn" evidence="20">
    <location>
        <begin position="45"/>
        <end position="47"/>
    </location>
</feature>
<feature type="strand" evidence="20">
    <location>
        <begin position="48"/>
        <end position="55"/>
    </location>
</feature>
<feature type="strand" evidence="20">
    <location>
        <begin position="57"/>
        <end position="61"/>
    </location>
</feature>
<feature type="turn" evidence="20">
    <location>
        <begin position="63"/>
        <end position="65"/>
    </location>
</feature>
<feature type="strand" evidence="20">
    <location>
        <begin position="68"/>
        <end position="71"/>
    </location>
</feature>
<feature type="strand" evidence="20">
    <location>
        <begin position="74"/>
        <end position="81"/>
    </location>
</feature>
<feature type="helix" evidence="20">
    <location>
        <begin position="83"/>
        <end position="89"/>
    </location>
</feature>
<keyword id="KW-0002">3D-structure</keyword>
<keyword id="KW-0007">Acetylation</keyword>
<keyword id="KW-0963">Cytoplasm</keyword>
<keyword id="KW-0226">DNA condensation</keyword>
<keyword id="KW-0238">DNA-binding</keyword>
<keyword id="KW-0408">Iron</keyword>
<keyword id="KW-0409">Iron storage</keyword>
<keyword id="KW-0560">Oxidoreductase</keyword>
<keyword id="KW-0597">Phosphoprotein</keyword>
<keyword id="KW-1185">Reference proteome</keyword>
<keyword id="KW-0677">Repeat</keyword>
<keyword id="KW-0804">Transcription</keyword>
<keyword id="KW-0805">Transcription regulation</keyword>
<name>DBH_MYCTA</name>
<accession>A5U6Z7</accession>
<dbReference type="EC" id="1.16.3.1" evidence="2"/>
<dbReference type="EMBL" id="CP000611">
    <property type="protein sequence ID" value="ABQ74797.1"/>
    <property type="molecule type" value="Genomic_DNA"/>
</dbReference>
<dbReference type="RefSeq" id="WP_003415107.1">
    <property type="nucleotide sequence ID" value="NZ_CP016972.1"/>
</dbReference>
<dbReference type="PDB" id="4DKY">
    <property type="method" value="X-ray"/>
    <property type="resolution" value="2.48 A"/>
    <property type="chains" value="A/B=3-102"/>
</dbReference>
<dbReference type="PDB" id="4PT4">
    <property type="method" value="X-ray"/>
    <property type="resolution" value="2.04 A"/>
    <property type="chains" value="A/B=3-101"/>
</dbReference>
<dbReference type="PDBsum" id="4DKY"/>
<dbReference type="PDBsum" id="4PT4"/>
<dbReference type="SMR" id="A5U6Z7"/>
<dbReference type="ChEMBL" id="CHEMBL6062"/>
<dbReference type="iPTMnet" id="A5U6Z7"/>
<dbReference type="GeneID" id="45426975"/>
<dbReference type="KEGG" id="mra:MRA_3015"/>
<dbReference type="eggNOG" id="COG0776">
    <property type="taxonomic scope" value="Bacteria"/>
</dbReference>
<dbReference type="HOGENOM" id="CLU_085366_0_0_11"/>
<dbReference type="EvolutionaryTrace" id="A5U6Z7"/>
<dbReference type="Proteomes" id="UP000001988">
    <property type="component" value="Chromosome"/>
</dbReference>
<dbReference type="GO" id="GO:0005829">
    <property type="term" value="C:cytosol"/>
    <property type="evidence" value="ECO:0007669"/>
    <property type="project" value="TreeGrafter"/>
</dbReference>
<dbReference type="GO" id="GO:0009295">
    <property type="term" value="C:nucleoid"/>
    <property type="evidence" value="ECO:0007669"/>
    <property type="project" value="UniProtKB-SubCell"/>
</dbReference>
<dbReference type="GO" id="GO:0003677">
    <property type="term" value="F:DNA binding"/>
    <property type="evidence" value="ECO:0007669"/>
    <property type="project" value="UniProtKB-KW"/>
</dbReference>
<dbReference type="GO" id="GO:0016491">
    <property type="term" value="F:oxidoreductase activity"/>
    <property type="evidence" value="ECO:0007669"/>
    <property type="project" value="UniProtKB-KW"/>
</dbReference>
<dbReference type="GO" id="GO:0030527">
    <property type="term" value="F:structural constituent of chromatin"/>
    <property type="evidence" value="ECO:0007669"/>
    <property type="project" value="InterPro"/>
</dbReference>
<dbReference type="GO" id="GO:0030261">
    <property type="term" value="P:chromosome condensation"/>
    <property type="evidence" value="ECO:0007669"/>
    <property type="project" value="UniProtKB-KW"/>
</dbReference>
<dbReference type="GO" id="GO:0006879">
    <property type="term" value="P:intracellular iron ion homeostasis"/>
    <property type="evidence" value="ECO:0007669"/>
    <property type="project" value="UniProtKB-KW"/>
</dbReference>
<dbReference type="CDD" id="cd13831">
    <property type="entry name" value="HU"/>
    <property type="match status" value="1"/>
</dbReference>
<dbReference type="FunFam" id="4.10.520.10:FF:000006">
    <property type="entry name" value="DNA-binding protein HU"/>
    <property type="match status" value="1"/>
</dbReference>
<dbReference type="Gene3D" id="4.10.520.10">
    <property type="entry name" value="IHF-like DNA-binding proteins"/>
    <property type="match status" value="1"/>
</dbReference>
<dbReference type="InterPro" id="IPR000119">
    <property type="entry name" value="Hist_DNA-bd"/>
</dbReference>
<dbReference type="InterPro" id="IPR020816">
    <property type="entry name" value="Histone-like_DNA-bd_CS"/>
</dbReference>
<dbReference type="InterPro" id="IPR010992">
    <property type="entry name" value="IHF-like_DNA-bd_dom_sf"/>
</dbReference>
<dbReference type="PANTHER" id="PTHR33175">
    <property type="entry name" value="DNA-BINDING PROTEIN HU"/>
    <property type="match status" value="1"/>
</dbReference>
<dbReference type="PANTHER" id="PTHR33175:SF3">
    <property type="entry name" value="DNA-BINDING PROTEIN HU-BETA"/>
    <property type="match status" value="1"/>
</dbReference>
<dbReference type="Pfam" id="PF00216">
    <property type="entry name" value="Bac_DNA_binding"/>
    <property type="match status" value="1"/>
</dbReference>
<dbReference type="PRINTS" id="PR01727">
    <property type="entry name" value="DNABINDINGHU"/>
</dbReference>
<dbReference type="SMART" id="SM00411">
    <property type="entry name" value="BHL"/>
    <property type="match status" value="1"/>
</dbReference>
<dbReference type="SUPFAM" id="SSF47729">
    <property type="entry name" value="IHF-like DNA-binding proteins"/>
    <property type="match status" value="1"/>
</dbReference>
<dbReference type="PROSITE" id="PS00045">
    <property type="entry name" value="HISTONE_LIKE"/>
    <property type="match status" value="1"/>
</dbReference>
<organism>
    <name type="scientific">Mycobacterium tuberculosis (strain ATCC 25177 / H37Ra)</name>
    <dbReference type="NCBI Taxonomy" id="419947"/>
    <lineage>
        <taxon>Bacteria</taxon>
        <taxon>Bacillati</taxon>
        <taxon>Actinomycetota</taxon>
        <taxon>Actinomycetes</taxon>
        <taxon>Mycobacteriales</taxon>
        <taxon>Mycobacteriaceae</taxon>
        <taxon>Mycobacterium</taxon>
        <taxon>Mycobacterium tuberculosis complex</taxon>
    </lineage>
</organism>
<gene>
    <name evidence="17" type="primary">hupB</name>
    <name evidence="17" type="ordered locus">MRA_3015</name>
</gene>
<reference evidence="17" key="1">
    <citation type="journal article" date="2008" name="PLoS ONE">
        <title>Genetic basis of virulence attenuation revealed by comparative genomic analysis of Mycobacterium tuberculosis strain H37Ra versus H37Rv.</title>
        <authorList>
            <person name="Zheng H."/>
            <person name="Lu L."/>
            <person name="Wang B."/>
            <person name="Pu S."/>
            <person name="Zhang X."/>
            <person name="Zhu G."/>
            <person name="Shi W."/>
            <person name="Zhang L."/>
            <person name="Wang H."/>
            <person name="Wang S."/>
            <person name="Zhao G."/>
            <person name="Zhang Y."/>
        </authorList>
    </citation>
    <scope>NUCLEOTIDE SEQUENCE [LARGE SCALE GENOMIC DNA]</scope>
    <source>
        <strain>ATCC 25177 / H37Ra</strain>
    </source>
</reference>
<reference key="2">
    <citation type="journal article" date="2014" name="J. Bacteriol.">
        <title>HupB, a nucleoid-associated protein of Mycobacterium tuberculosis, is modified by serine/threonine protein kinases in vivo.</title>
        <authorList>
            <person name="Gupta M."/>
            <person name="Sajid A."/>
            <person name="Sharma K."/>
            <person name="Ghosh S."/>
            <person name="Arora G."/>
            <person name="Singh R."/>
            <person name="Nagaraja V."/>
            <person name="Tandon V."/>
            <person name="Singh Y."/>
        </authorList>
    </citation>
    <scope>FUNCTION</scope>
    <scope>INDUCTION</scope>
    <scope>PHOSPHORYLATION AT THR-43 AND AT THR-45</scope>
    <scope>DNA-BINDING</scope>
    <scope>MUTAGENESIS OF ARG-55; THR-65; THR-68; THR-74 AND SER-163</scope>
    <source>
        <strain>ATCC 25177 / H37Ra</strain>
    </source>
</reference>
<reference key="3">
    <citation type="journal article" date="2014" name="Nucleic Acids Res.">
        <title>Direct regulation of topoisomerase activity by a nucleoid-associated protein.</title>
        <authorList>
            <person name="Ghosh S."/>
            <person name="Mallick B."/>
            <person name="Nagaraja V."/>
        </authorList>
    </citation>
    <scope>FUNCTION</scope>
    <scope>INTERACTION WITH TOPA</scope>
    <scope>DOMAIN</scope>
    <scope>MUTAGENESIS OF ASP-17 AND ARG-55</scope>
    <source>
        <strain>ATCC 25177 / H37Ra</strain>
    </source>
</reference>
<reference key="4">
    <citation type="journal article" date="2016" name="Mol. Microbiol.">
        <title>Lysine acetylation of the Mycobacterium tuberculosis HU protein modulates its DNA binding and genome organization.</title>
        <authorList>
            <person name="Ghosh S."/>
            <person name="Padmanabhan B."/>
            <person name="Anand C."/>
            <person name="Nagaraja V."/>
        </authorList>
    </citation>
    <scope>FUNCTION</scope>
    <scope>INTERACTION WITH EIS</scope>
    <scope>ACETYLATION AT LYS-3; LYS-72; LYS-86; LYS-103; LYS-116; LYS-133; LYS-146 AND LYS-167</scope>
    <scope>DNA-BINDING</scope>
    <source>
        <strain>ATCC 25177 / H37Ra</strain>
    </source>
</reference>
<reference key="5">
    <citation type="journal article" date="2017" name="Biochem. Biophys. Res. Commun.">
        <title>A Sir2 family protein Rv1151c deacetylates HU to alter its DNA binding mode in Mycobacterium tuberculosis.</title>
        <authorList>
            <person name="Anand C."/>
            <person name="Garg R."/>
            <person name="Ghosh S."/>
            <person name="Nagaraja V."/>
        </authorList>
    </citation>
    <scope>INTERACTION WITH NPD</scope>
    <scope>DEACETYLATION BY NPD</scope>
    <source>
        <strain>ATCC 25177 / H37Ra</strain>
    </source>
</reference>
<reference key="6">
    <citation type="journal article" date="2021" name="Microbiology">
        <title>Rv0802c is an acyltransferase that succinylates and acetylates Mycobacterium tuberculosis nucleoid-associated protein HU.</title>
        <authorList>
            <person name="Anand C."/>
            <person name="Santoshi M."/>
            <person name="Singh P.R."/>
            <person name="Nagaraja V."/>
        </authorList>
    </citation>
    <scope>FUNCTION</scope>
    <scope>INTERACTION WITH MRA_0812 COA TRANSFERASE</scope>
    <scope>ACETYLATION</scope>
    <scope>SUCCINYLATION AT LYS-3; LYS-113 AND LYS-142</scope>
    <scope>DNA-BINDING</scope>
    <source>
        <strain>ATCC 25177 / H37Ra</strain>
    </source>
</reference>
<reference evidence="18 19" key="7">
    <citation type="journal article" date="2014" name="Nat. Commun.">
        <title>Targeting Mycobacterium tuberculosis nucleoid-associated protein HU with structure-based inhibitors.</title>
        <authorList>
            <person name="Bhowmick T."/>
            <person name="Ghosh S."/>
            <person name="Dixit K."/>
            <person name="Ganesan V."/>
            <person name="Ramagopal U.A."/>
            <person name="Dey D."/>
            <person name="Sarma S.P."/>
            <person name="Ramakumar S."/>
            <person name="Nagaraja V."/>
        </authorList>
    </citation>
    <scope>X-RAY CRYSTALLOGRAPHY (2.04 ANGSTROMS) OF 3-101</scope>
    <scope>FUNCTION</scope>
    <scope>ACTIVITY REGULATION</scope>
    <scope>SUBUNIT</scope>
    <scope>SUBCELLULAR LOCATION</scope>
    <scope>DOMAIN</scope>
    <scope>DISRUPTION PHENOTYPE</scope>
    <scope>DNA-BINDING</scope>
    <scope>MUTAGENESIS OF ARG-55; ARG-58; ARG-80 AND LYS-86</scope>
    <source>
        <strain>ATCC 25177 / H37Ra</strain>
    </source>
</reference>
<comment type="function">
    <text evidence="5 6 7 8 9 10 15">A nucleoid-associated protein (NAP) that plays a role in local chromosome architecture (Probable) (PubMed:24916461). Binds DNA non-sequence specifically; in vitro phosphorylation of an N-terminal fragment decreases DNA-binding (PubMed:24816602). Stimulates supercoiling relaxation by topoisomerase 1 (Top1, topA), at higher than 80 uM inhibits relaxation, has no effect on DNA gyrase; the effect is independent of DNA-binding. Increases the intervening strand passage activity of Top1 that occurs between the two catalytic trans-esterification reactions (PubMed:25200077). Does not bind ssDNA, probably helps condense chromosomes (PubMed:24916461). Binds dsDNA; in vitro acetylated protein binds 10-fold less well to DNA (note in vitro acetylated protein is more heavily modified than in vivo modified protein). In vitro acetylated protein compacts DNA less well than unmodified protein (PubMed:26817737, PubMed:28935371). In vitro succinylated DNA bind dsDNA less well than unmodified protein (note in vitro succinylated protein is more heavily modified than in vivo modified protein) (PubMed:34224344).</text>
</comment>
<comment type="function">
    <text evidence="2">Has ferroxidase activity, converts Fe(2+) into Fe(3+). Binds Fe(3+) but not Fe(2+); prevents the generation of hydroxyl radicals by the Fenton reaction and thus protects DNA from damage. May function in iron storage.</text>
</comment>
<comment type="function">
    <text evidence="1 3">Required for biofilm formation; trimethylation by recombinant human SUV39H1 (a histone methyltransferase) inhibits biofilm formation (By similarity). Probably influences transcription (By similarity). RNase E and HupB jointly contribute to cellular adaptation to changing growth conditions and survival during antibiotic treatment and in the host (By similarity).</text>
</comment>
<comment type="catalytic activity">
    <reaction evidence="2">
        <text>4 Fe(2+) + O2 + 4 H(+) = 4 Fe(3+) + 2 H2O</text>
        <dbReference type="Rhea" id="RHEA:11148"/>
        <dbReference type="ChEBI" id="CHEBI:15377"/>
        <dbReference type="ChEBI" id="CHEBI:15378"/>
        <dbReference type="ChEBI" id="CHEBI:15379"/>
        <dbReference type="ChEBI" id="CHEBI:29033"/>
        <dbReference type="ChEBI" id="CHEBI:29034"/>
        <dbReference type="EC" id="1.16.3.1"/>
    </reaction>
    <physiologicalReaction direction="left-to-right" evidence="2">
        <dbReference type="Rhea" id="RHEA:11149"/>
    </physiologicalReaction>
</comment>
<comment type="activity regulation">
    <text evidence="6">Two trans-stilbene derivatives, 4,4'-[(E)-ethene-1,2 diylbis({5[(phenylcarbonyl)amino]benzene-2,1-diyl}sulfonylimino)] dibenzoic acid and its methoxy derivative 4,4'-[1,2-ethenediylbis({5-[(4-methoxybenzoyl)amino]-2,1phenylene}sulfonylimino)] dibenzoic acid, respectively SD1 and SD4, inhibit DNA binding with 50% inhibition at 20 uM for SD1 and 1.7 uM for SD4. SD1 and SD4 have minimal inhibitory concentrations of 400 and 800 uM on strain H37Ra respectively.</text>
</comment>
<comment type="subunit">
    <text evidence="2 7 8 9 10 15">Oligomerizes (By similarity). Homodimer; the crystallized protein is missing the C-terminal 105 residues (Probable). Interacts with topoisomerase 1 (topA) (PubMed:25200077). Interacts with Eis (PubMed:26817737). Interacts with NAD-dependent protein deacylase NPD (MRA_1161) (PubMed:28935371). Interacts with MRA_0812 CoA transferase (PubMed:34224344).</text>
</comment>
<comment type="subcellular location">
    <subcellularLocation>
        <location evidence="6">Cytoplasm</location>
        <location evidence="6">Nucleoid</location>
    </subcellularLocation>
</comment>
<comment type="induction">
    <text evidence="5">Transcribed in early log phase, decreases in mid-log, and rises into late-log and early stationary phase. Protein levels rise as cells enter stationary phase (at protein level).</text>
</comment>
<comment type="domain">
    <text evidence="5 6 7">The N-terminus (residues 1-108) is stable, binds DNA and is phosphorylated in vitro by PknE, PknF and PknB. This fragment binds DNA less well when phosphorylated by PknE (PubMed:24816602). Residues 1-100 stimulate Top1 and physically interact with it (PubMed:25200077). The N-terminus (residues 1-40) forms an intertwined dimer, while residues 44-83 form a beta-saddle which probably contacts DNA (PubMed:24916461).</text>
</comment>
<comment type="PTM">
    <text evidence="5">Phosphorylated in vivo on Ser and Thr-residues; the protein is degraded during purification so most sites were not identified, but at least one of Thr-43 and/or Thr-45 are modified in vivo. In vitro at least PknE, PknF and PknB phosphorylate HupB; PknE is the most active and phosphorylates many sites in vitro including Thr-43 and Thr-45 (PubMed:24816602).</text>
</comment>
<comment type="PTM">
    <text evidence="8 9 10 16">Acetylated on 8 Lys residues in vivo (probably by Eis) (Probable) (PubMed:26817737). In vitro acetylated by Eis on 28 residues (strains H37Rv and H37Ra), many more than those identified in vivo (PubMed:26817737). Also acetylated by MRA_0812 (PubMed:34224344). Deacetylated in vitro by NAD-dependent protein deacylase NPD (MRA_1161) (PubMed:28935371).</text>
</comment>
<comment type="PTM">
    <text evidence="10">Succinylated in vivo and in vitro by MRA_0812 and by Eis; only 3 residues are found to be succinylated in vivo, while 27 are modifed in vitro by MRA_0812 and 32 are succinylated by Eis. NAD-dependent protein deacylase (MRA_1161) desuccinylates this protein.</text>
</comment>
<comment type="disruption phenotype">
    <text evidence="6">Essential it cannot be deleted; upon depletion growth slows dramatically, nucleoids decompact, gene expression is altered.</text>
</comment>
<comment type="similarity">
    <text evidence="13">Belongs to the bacterial histone-like protein family. Long actinobacterial subfamily.</text>
</comment>
<evidence type="ECO:0000250" key="1">
    <source>
        <dbReference type="UniProtKB" id="P9WMK7"/>
    </source>
</evidence>
<evidence type="ECO:0000250" key="2">
    <source>
        <dbReference type="UniProtKB" id="Q9XB18"/>
    </source>
</evidence>
<evidence type="ECO:0000250" key="3">
    <source>
        <dbReference type="UniProtKB" id="Q9ZHC5"/>
    </source>
</evidence>
<evidence type="ECO:0000256" key="4">
    <source>
        <dbReference type="SAM" id="MobiDB-lite"/>
    </source>
</evidence>
<evidence type="ECO:0000269" key="5">
    <source>
    </source>
</evidence>
<evidence type="ECO:0000269" key="6">
    <source>
    </source>
</evidence>
<evidence type="ECO:0000269" key="7">
    <source>
    </source>
</evidence>
<evidence type="ECO:0000269" key="8">
    <source>
    </source>
</evidence>
<evidence type="ECO:0000269" key="9">
    <source>
    </source>
</evidence>
<evidence type="ECO:0000269" key="10">
    <source>
    </source>
</evidence>
<evidence type="ECO:0000303" key="11">
    <source>
    </source>
</evidence>
<evidence type="ECO:0000303" key="12">
    <source>
    </source>
</evidence>
<evidence type="ECO:0000305" key="13"/>
<evidence type="ECO:0000305" key="14">
    <source>
    </source>
</evidence>
<evidence type="ECO:0000305" key="15">
    <source>
    </source>
</evidence>
<evidence type="ECO:0000305" key="16">
    <source>
    </source>
</evidence>
<evidence type="ECO:0000312" key="17">
    <source>
        <dbReference type="EMBL" id="ABQ74797.1"/>
    </source>
</evidence>
<evidence type="ECO:0007744" key="18">
    <source>
        <dbReference type="PDB" id="4DKY"/>
    </source>
</evidence>
<evidence type="ECO:0007744" key="19">
    <source>
        <dbReference type="PDB" id="4PT4"/>
    </source>
</evidence>
<evidence type="ECO:0007829" key="20">
    <source>
        <dbReference type="PDB" id="4PT4"/>
    </source>
</evidence>